<dbReference type="EMBL" id="AK161334">
    <property type="protein sequence ID" value="BAE36331.1"/>
    <property type="molecule type" value="mRNA"/>
</dbReference>
<dbReference type="CCDS" id="CCDS22250.1"/>
<dbReference type="RefSeq" id="NP_001034309.1">
    <property type="nucleotide sequence ID" value="NM_001039220.3"/>
</dbReference>
<dbReference type="BioGRID" id="548134">
    <property type="interactions" value="1"/>
</dbReference>
<dbReference type="FunCoup" id="Q3TTJ4">
    <property type="interactions" value="10"/>
</dbReference>
<dbReference type="GlyGen" id="Q3TTJ4">
    <property type="glycosylation" value="1 site, 1 O-linked glycan (1 site)"/>
</dbReference>
<dbReference type="iPTMnet" id="Q3TTJ4"/>
<dbReference type="PhosphoSitePlus" id="Q3TTJ4"/>
<dbReference type="PaxDb" id="10090-ENSMUSP00000096424"/>
<dbReference type="Antibodypedia" id="21009">
    <property type="antibodies" value="96 antibodies from 16 providers"/>
</dbReference>
<dbReference type="Ensembl" id="ENSMUST00000098825.5">
    <property type="protein sequence ID" value="ENSMUSP00000096424.4"/>
    <property type="gene ID" value="ENSMUSG00000074384.5"/>
</dbReference>
<dbReference type="GeneID" id="621080"/>
<dbReference type="KEGG" id="mmu:621080"/>
<dbReference type="UCSC" id="uc009llx.2">
    <property type="organism name" value="mouse"/>
</dbReference>
<dbReference type="AGR" id="MGI:2142538"/>
<dbReference type="MGI" id="MGI:2142538">
    <property type="gene designation" value="AI429214"/>
</dbReference>
<dbReference type="VEuPathDB" id="HostDB:ENSMUSG00000074384"/>
<dbReference type="eggNOG" id="ENOG502S4XK">
    <property type="taxonomic scope" value="Eukaryota"/>
</dbReference>
<dbReference type="GeneTree" id="ENSGT00390000008508"/>
<dbReference type="HOGENOM" id="CLU_073087_0_0_1"/>
<dbReference type="InParanoid" id="Q3TTJ4"/>
<dbReference type="OMA" id="SQCPSCN"/>
<dbReference type="OrthoDB" id="9976953at2759"/>
<dbReference type="PhylomeDB" id="Q3TTJ4"/>
<dbReference type="TreeFam" id="TF328632"/>
<dbReference type="BioGRID-ORCS" id="621080">
    <property type="hits" value="0 hits in 77 CRISPR screens"/>
</dbReference>
<dbReference type="PRO" id="PR:Q3TTJ4"/>
<dbReference type="Proteomes" id="UP000000589">
    <property type="component" value="Chromosome 8"/>
</dbReference>
<dbReference type="RNAct" id="Q3TTJ4">
    <property type="molecule type" value="protein"/>
</dbReference>
<dbReference type="Bgee" id="ENSMUSG00000074384">
    <property type="expression patterns" value="Expressed in spermatocyte and 148 other cell types or tissues"/>
</dbReference>
<dbReference type="InterPro" id="IPR027932">
    <property type="entry name" value="DUF4606"/>
</dbReference>
<dbReference type="PANTHER" id="PTHR35256">
    <property type="entry name" value="CHROMOSOME 8 OPEN READING FRAME 48"/>
    <property type="match status" value="1"/>
</dbReference>
<dbReference type="PANTHER" id="PTHR35256:SF1">
    <property type="entry name" value="EXPRESSED SEQUENCE AI429214"/>
    <property type="match status" value="1"/>
</dbReference>
<dbReference type="Pfam" id="PF15379">
    <property type="entry name" value="DUF4606"/>
    <property type="match status" value="1"/>
</dbReference>
<organism>
    <name type="scientific">Mus musculus</name>
    <name type="common">Mouse</name>
    <dbReference type="NCBI Taxonomy" id="10090"/>
    <lineage>
        <taxon>Eukaryota</taxon>
        <taxon>Metazoa</taxon>
        <taxon>Chordata</taxon>
        <taxon>Craniata</taxon>
        <taxon>Vertebrata</taxon>
        <taxon>Euteleostomi</taxon>
        <taxon>Mammalia</taxon>
        <taxon>Eutheria</taxon>
        <taxon>Euarchontoglires</taxon>
        <taxon>Glires</taxon>
        <taxon>Rodentia</taxon>
        <taxon>Myomorpha</taxon>
        <taxon>Muroidea</taxon>
        <taxon>Muridae</taxon>
        <taxon>Murinae</taxon>
        <taxon>Mus</taxon>
        <taxon>Mus</taxon>
    </lineage>
</organism>
<protein>
    <recommendedName>
        <fullName>Uncharacterized protein C8orf48 homolog</fullName>
    </recommendedName>
</protein>
<reference key="1">
    <citation type="journal article" date="2005" name="Science">
        <title>The transcriptional landscape of the mammalian genome.</title>
        <authorList>
            <person name="Carninci P."/>
            <person name="Kasukawa T."/>
            <person name="Katayama S."/>
            <person name="Gough J."/>
            <person name="Frith M.C."/>
            <person name="Maeda N."/>
            <person name="Oyama R."/>
            <person name="Ravasi T."/>
            <person name="Lenhard B."/>
            <person name="Wells C."/>
            <person name="Kodzius R."/>
            <person name="Shimokawa K."/>
            <person name="Bajic V.B."/>
            <person name="Brenner S.E."/>
            <person name="Batalov S."/>
            <person name="Forrest A.R."/>
            <person name="Zavolan M."/>
            <person name="Davis M.J."/>
            <person name="Wilming L.G."/>
            <person name="Aidinis V."/>
            <person name="Allen J.E."/>
            <person name="Ambesi-Impiombato A."/>
            <person name="Apweiler R."/>
            <person name="Aturaliya R.N."/>
            <person name="Bailey T.L."/>
            <person name="Bansal M."/>
            <person name="Baxter L."/>
            <person name="Beisel K.W."/>
            <person name="Bersano T."/>
            <person name="Bono H."/>
            <person name="Chalk A.M."/>
            <person name="Chiu K.P."/>
            <person name="Choudhary V."/>
            <person name="Christoffels A."/>
            <person name="Clutterbuck D.R."/>
            <person name="Crowe M.L."/>
            <person name="Dalla E."/>
            <person name="Dalrymple B.P."/>
            <person name="de Bono B."/>
            <person name="Della Gatta G."/>
            <person name="di Bernardo D."/>
            <person name="Down T."/>
            <person name="Engstrom P."/>
            <person name="Fagiolini M."/>
            <person name="Faulkner G."/>
            <person name="Fletcher C.F."/>
            <person name="Fukushima T."/>
            <person name="Furuno M."/>
            <person name="Futaki S."/>
            <person name="Gariboldi M."/>
            <person name="Georgii-Hemming P."/>
            <person name="Gingeras T.R."/>
            <person name="Gojobori T."/>
            <person name="Green R.E."/>
            <person name="Gustincich S."/>
            <person name="Harbers M."/>
            <person name="Hayashi Y."/>
            <person name="Hensch T.K."/>
            <person name="Hirokawa N."/>
            <person name="Hill D."/>
            <person name="Huminiecki L."/>
            <person name="Iacono M."/>
            <person name="Ikeo K."/>
            <person name="Iwama A."/>
            <person name="Ishikawa T."/>
            <person name="Jakt M."/>
            <person name="Kanapin A."/>
            <person name="Katoh M."/>
            <person name="Kawasawa Y."/>
            <person name="Kelso J."/>
            <person name="Kitamura H."/>
            <person name="Kitano H."/>
            <person name="Kollias G."/>
            <person name="Krishnan S.P."/>
            <person name="Kruger A."/>
            <person name="Kummerfeld S.K."/>
            <person name="Kurochkin I.V."/>
            <person name="Lareau L.F."/>
            <person name="Lazarevic D."/>
            <person name="Lipovich L."/>
            <person name="Liu J."/>
            <person name="Liuni S."/>
            <person name="McWilliam S."/>
            <person name="Madan Babu M."/>
            <person name="Madera M."/>
            <person name="Marchionni L."/>
            <person name="Matsuda H."/>
            <person name="Matsuzawa S."/>
            <person name="Miki H."/>
            <person name="Mignone F."/>
            <person name="Miyake S."/>
            <person name="Morris K."/>
            <person name="Mottagui-Tabar S."/>
            <person name="Mulder N."/>
            <person name="Nakano N."/>
            <person name="Nakauchi H."/>
            <person name="Ng P."/>
            <person name="Nilsson R."/>
            <person name="Nishiguchi S."/>
            <person name="Nishikawa S."/>
            <person name="Nori F."/>
            <person name="Ohara O."/>
            <person name="Okazaki Y."/>
            <person name="Orlando V."/>
            <person name="Pang K.C."/>
            <person name="Pavan W.J."/>
            <person name="Pavesi G."/>
            <person name="Pesole G."/>
            <person name="Petrovsky N."/>
            <person name="Piazza S."/>
            <person name="Reed J."/>
            <person name="Reid J.F."/>
            <person name="Ring B.Z."/>
            <person name="Ringwald M."/>
            <person name="Rost B."/>
            <person name="Ruan Y."/>
            <person name="Salzberg S.L."/>
            <person name="Sandelin A."/>
            <person name="Schneider C."/>
            <person name="Schoenbach C."/>
            <person name="Sekiguchi K."/>
            <person name="Semple C.A."/>
            <person name="Seno S."/>
            <person name="Sessa L."/>
            <person name="Sheng Y."/>
            <person name="Shibata Y."/>
            <person name="Shimada H."/>
            <person name="Shimada K."/>
            <person name="Silva D."/>
            <person name="Sinclair B."/>
            <person name="Sperling S."/>
            <person name="Stupka E."/>
            <person name="Sugiura K."/>
            <person name="Sultana R."/>
            <person name="Takenaka Y."/>
            <person name="Taki K."/>
            <person name="Tammoja K."/>
            <person name="Tan S.L."/>
            <person name="Tang S."/>
            <person name="Taylor M.S."/>
            <person name="Tegner J."/>
            <person name="Teichmann S.A."/>
            <person name="Ueda H.R."/>
            <person name="van Nimwegen E."/>
            <person name="Verardo R."/>
            <person name="Wei C.L."/>
            <person name="Yagi K."/>
            <person name="Yamanishi H."/>
            <person name="Zabarovsky E."/>
            <person name="Zhu S."/>
            <person name="Zimmer A."/>
            <person name="Hide W."/>
            <person name="Bult C."/>
            <person name="Grimmond S.M."/>
            <person name="Teasdale R.D."/>
            <person name="Liu E.T."/>
            <person name="Brusic V."/>
            <person name="Quackenbush J."/>
            <person name="Wahlestedt C."/>
            <person name="Mattick J.S."/>
            <person name="Hume D.A."/>
            <person name="Kai C."/>
            <person name="Sasaki D."/>
            <person name="Tomaru Y."/>
            <person name="Fukuda S."/>
            <person name="Kanamori-Katayama M."/>
            <person name="Suzuki M."/>
            <person name="Aoki J."/>
            <person name="Arakawa T."/>
            <person name="Iida J."/>
            <person name="Imamura K."/>
            <person name="Itoh M."/>
            <person name="Kato T."/>
            <person name="Kawaji H."/>
            <person name="Kawagashira N."/>
            <person name="Kawashima T."/>
            <person name="Kojima M."/>
            <person name="Kondo S."/>
            <person name="Konno H."/>
            <person name="Nakano K."/>
            <person name="Ninomiya N."/>
            <person name="Nishio T."/>
            <person name="Okada M."/>
            <person name="Plessy C."/>
            <person name="Shibata K."/>
            <person name="Shiraki T."/>
            <person name="Suzuki S."/>
            <person name="Tagami M."/>
            <person name="Waki K."/>
            <person name="Watahiki A."/>
            <person name="Okamura-Oho Y."/>
            <person name="Suzuki H."/>
            <person name="Kawai J."/>
            <person name="Hayashizaki Y."/>
        </authorList>
    </citation>
    <scope>NUCLEOTIDE SEQUENCE [LARGE SCALE MRNA]</scope>
    <source>
        <strain>C57BL/6J</strain>
        <tissue>Testis</tissue>
    </source>
</reference>
<accession>Q3TTJ4</accession>
<name>CH048_MOUSE</name>
<evidence type="ECO:0000256" key="1">
    <source>
        <dbReference type="SAM" id="MobiDB-lite"/>
    </source>
</evidence>
<feature type="chain" id="PRO_0000285632" description="Uncharacterized protein C8orf48 homolog">
    <location>
        <begin position="1"/>
        <end position="293"/>
    </location>
</feature>
<feature type="region of interest" description="Disordered" evidence="1">
    <location>
        <begin position="1"/>
        <end position="23"/>
    </location>
</feature>
<feature type="region of interest" description="Disordered" evidence="1">
    <location>
        <begin position="52"/>
        <end position="83"/>
    </location>
</feature>
<feature type="compositionally biased region" description="Basic and acidic residues" evidence="1">
    <location>
        <begin position="8"/>
        <end position="17"/>
    </location>
</feature>
<feature type="compositionally biased region" description="Polar residues" evidence="1">
    <location>
        <begin position="52"/>
        <end position="71"/>
    </location>
</feature>
<keyword id="KW-1185">Reference proteome</keyword>
<sequence length="293" mass="33319">MGWPPAQKPEDSKEEHGGPAQTDVCATQVSEEFPGSCADEVLSSGSISFSGELQSYSHTSESPVETKTPTTSSEEQDEQSELSLLQKDENKLSEMWINHLKSKEIHSERSQPDRRLPPEIPKESAEELDALQSFCTKKVNLIHQRQDLRAKKSNRPKRLQLRWIAETSEVDAFNCTIPDELWNRIYLENTRATLAYIGAITQHISSQCPSCNSKRAELAQSDFLRRRKTLLQSLLLQEKIDEHLHTTDFLTRVGEAHQGFPRLSDDPRIIWKRLTEKMLKGSSGFGRAYSKQV</sequence>
<proteinExistence type="evidence at transcript level"/>